<sequence length="74" mass="8083">MPPQSDDKRQAAREVIDILHEISTLLNTNLDRTELSLCVSLIENGVNPDALATVIKDLRTEAGLALRASNESPE</sequence>
<organism>
    <name type="scientific">Emericella nidulans (strain FGSC A4 / ATCC 38163 / CBS 112.46 / NRRL 194 / M139)</name>
    <name type="common">Aspergillus nidulans</name>
    <dbReference type="NCBI Taxonomy" id="227321"/>
    <lineage>
        <taxon>Eukaryota</taxon>
        <taxon>Fungi</taxon>
        <taxon>Dikarya</taxon>
        <taxon>Ascomycota</taxon>
        <taxon>Pezizomycotina</taxon>
        <taxon>Eurotiomycetes</taxon>
        <taxon>Eurotiomycetidae</taxon>
        <taxon>Eurotiales</taxon>
        <taxon>Aspergillaceae</taxon>
        <taxon>Aspergillus</taxon>
        <taxon>Aspergillus subgen. Nidulantes</taxon>
    </lineage>
</organism>
<evidence type="ECO:0000250" key="1"/>
<evidence type="ECO:0000305" key="2"/>
<feature type="chain" id="PRO_0000365084" description="Mitotic-spindle organizing protein 1">
    <location>
        <begin position="1"/>
        <end position="74"/>
    </location>
</feature>
<accession>Q5BDL9</accession>
<accession>C8VRW8</accession>
<dbReference type="EMBL" id="AACD01000018">
    <property type="protein sequence ID" value="EAA65544.1"/>
    <property type="molecule type" value="Genomic_DNA"/>
</dbReference>
<dbReference type="EMBL" id="BN001308">
    <property type="protein sequence ID" value="CBF87647.1"/>
    <property type="status" value="ALT_SEQ"/>
    <property type="molecule type" value="Genomic_DNA"/>
</dbReference>
<dbReference type="RefSeq" id="XP_658965.1">
    <property type="nucleotide sequence ID" value="XM_653873.1"/>
</dbReference>
<dbReference type="SMR" id="Q5BDL9"/>
<dbReference type="STRING" id="227321.Q5BDL9"/>
<dbReference type="KEGG" id="ani:ANIA_01361"/>
<dbReference type="HOGENOM" id="CLU_160285_2_0_1"/>
<dbReference type="InParanoid" id="Q5BDL9"/>
<dbReference type="OrthoDB" id="48571at2759"/>
<dbReference type="Proteomes" id="UP000000560">
    <property type="component" value="Chromosome VIII"/>
</dbReference>
<dbReference type="GO" id="GO:0005737">
    <property type="term" value="C:cytoplasm"/>
    <property type="evidence" value="ECO:0007669"/>
    <property type="project" value="UniProtKB-KW"/>
</dbReference>
<dbReference type="GO" id="GO:0000930">
    <property type="term" value="C:gamma-tubulin complex"/>
    <property type="evidence" value="ECO:0000318"/>
    <property type="project" value="GO_Central"/>
</dbReference>
<dbReference type="GO" id="GO:0000931">
    <property type="term" value="C:gamma-tubulin ring complex"/>
    <property type="evidence" value="ECO:0007669"/>
    <property type="project" value="InterPro"/>
</dbReference>
<dbReference type="GO" id="GO:0031021">
    <property type="term" value="C:interphase microtubule organizing center"/>
    <property type="evidence" value="ECO:0000318"/>
    <property type="project" value="GO_Central"/>
</dbReference>
<dbReference type="GO" id="GO:0044732">
    <property type="term" value="C:mitotic spindle pole body"/>
    <property type="evidence" value="ECO:0000318"/>
    <property type="project" value="GO_Central"/>
</dbReference>
<dbReference type="GO" id="GO:0005819">
    <property type="term" value="C:spindle"/>
    <property type="evidence" value="ECO:0000318"/>
    <property type="project" value="GO_Central"/>
</dbReference>
<dbReference type="GO" id="GO:0033566">
    <property type="term" value="P:gamma-tubulin complex localization"/>
    <property type="evidence" value="ECO:0007669"/>
    <property type="project" value="InterPro"/>
</dbReference>
<dbReference type="GO" id="GO:0051415">
    <property type="term" value="P:microtubule nucleation by interphase microtubule organizing center"/>
    <property type="evidence" value="ECO:0000318"/>
    <property type="project" value="GO_Central"/>
</dbReference>
<dbReference type="GO" id="GO:0090307">
    <property type="term" value="P:mitotic spindle assembly"/>
    <property type="evidence" value="ECO:0000318"/>
    <property type="project" value="GO_Central"/>
</dbReference>
<dbReference type="InterPro" id="IPR022214">
    <property type="entry name" value="MZT1"/>
</dbReference>
<dbReference type="PANTHER" id="PTHR28520">
    <property type="entry name" value="MITOTIC-SPINDLE ORGANIZING PROTEIN 1"/>
    <property type="match status" value="1"/>
</dbReference>
<dbReference type="PANTHER" id="PTHR28520:SF2">
    <property type="entry name" value="MITOTIC-SPINDLE ORGANIZING PROTEIN 1"/>
    <property type="match status" value="1"/>
</dbReference>
<dbReference type="Pfam" id="PF12554">
    <property type="entry name" value="MOZART1"/>
    <property type="match status" value="1"/>
</dbReference>
<name>MZT1_EMENI</name>
<proteinExistence type="inferred from homology"/>
<comment type="function">
    <text evidence="1">Required for gamma-tubulin complex recruitment to the microtubule organizing center (MTOC).</text>
</comment>
<comment type="subunit">
    <text evidence="1">Part of the gamma-tubulin complex.</text>
</comment>
<comment type="subcellular location">
    <subcellularLocation>
        <location evidence="1">Cytoplasm</location>
        <location evidence="1">Cytoskeleton</location>
        <location evidence="1">Microtubule organizing center</location>
        <location evidence="1">Spindle pole body</location>
    </subcellularLocation>
</comment>
<comment type="similarity">
    <text evidence="2">Belongs to the MOZART1 family.</text>
</comment>
<comment type="sequence caution" evidence="2">
    <conflict type="erroneous gene model prediction">
        <sequence resource="EMBL-CDS" id="CBF87647"/>
    </conflict>
</comment>
<gene>
    <name type="ORF">AN1361</name>
</gene>
<reference key="1">
    <citation type="journal article" date="2005" name="Nature">
        <title>Sequencing of Aspergillus nidulans and comparative analysis with A. fumigatus and A. oryzae.</title>
        <authorList>
            <person name="Galagan J.E."/>
            <person name="Calvo S.E."/>
            <person name="Cuomo C."/>
            <person name="Ma L.-J."/>
            <person name="Wortman J.R."/>
            <person name="Batzoglou S."/>
            <person name="Lee S.-I."/>
            <person name="Bastuerkmen M."/>
            <person name="Spevak C.C."/>
            <person name="Clutterbuck J."/>
            <person name="Kapitonov V."/>
            <person name="Jurka J."/>
            <person name="Scazzocchio C."/>
            <person name="Farman M.L."/>
            <person name="Butler J."/>
            <person name="Purcell S."/>
            <person name="Harris S."/>
            <person name="Braus G.H."/>
            <person name="Draht O."/>
            <person name="Busch S."/>
            <person name="D'Enfert C."/>
            <person name="Bouchier C."/>
            <person name="Goldman G.H."/>
            <person name="Bell-Pedersen D."/>
            <person name="Griffiths-Jones S."/>
            <person name="Doonan J.H."/>
            <person name="Yu J."/>
            <person name="Vienken K."/>
            <person name="Pain A."/>
            <person name="Freitag M."/>
            <person name="Selker E.U."/>
            <person name="Archer D.B."/>
            <person name="Penalva M.A."/>
            <person name="Oakley B.R."/>
            <person name="Momany M."/>
            <person name="Tanaka T."/>
            <person name="Kumagai T."/>
            <person name="Asai K."/>
            <person name="Machida M."/>
            <person name="Nierman W.C."/>
            <person name="Denning D.W."/>
            <person name="Caddick M.X."/>
            <person name="Hynes M."/>
            <person name="Paoletti M."/>
            <person name="Fischer R."/>
            <person name="Miller B.L."/>
            <person name="Dyer P.S."/>
            <person name="Sachs M.S."/>
            <person name="Osmani S.A."/>
            <person name="Birren B.W."/>
        </authorList>
    </citation>
    <scope>NUCLEOTIDE SEQUENCE [LARGE SCALE GENOMIC DNA]</scope>
    <source>
        <strain>FGSC A4 / ATCC 38163 / CBS 112.46 / NRRL 194 / M139</strain>
    </source>
</reference>
<reference key="2">
    <citation type="journal article" date="2009" name="Fungal Genet. Biol.">
        <title>The 2008 update of the Aspergillus nidulans genome annotation: a community effort.</title>
        <authorList>
            <person name="Wortman J.R."/>
            <person name="Gilsenan J.M."/>
            <person name="Joardar V."/>
            <person name="Deegan J."/>
            <person name="Clutterbuck J."/>
            <person name="Andersen M.R."/>
            <person name="Archer D."/>
            <person name="Bencina M."/>
            <person name="Braus G."/>
            <person name="Coutinho P."/>
            <person name="von Dohren H."/>
            <person name="Doonan J."/>
            <person name="Driessen A.J."/>
            <person name="Durek P."/>
            <person name="Espeso E."/>
            <person name="Fekete E."/>
            <person name="Flipphi M."/>
            <person name="Estrada C.G."/>
            <person name="Geysens S."/>
            <person name="Goldman G."/>
            <person name="de Groot P.W."/>
            <person name="Hansen K."/>
            <person name="Harris S.D."/>
            <person name="Heinekamp T."/>
            <person name="Helmstaedt K."/>
            <person name="Henrissat B."/>
            <person name="Hofmann G."/>
            <person name="Homan T."/>
            <person name="Horio T."/>
            <person name="Horiuchi H."/>
            <person name="James S."/>
            <person name="Jones M."/>
            <person name="Karaffa L."/>
            <person name="Karanyi Z."/>
            <person name="Kato M."/>
            <person name="Keller N."/>
            <person name="Kelly D.E."/>
            <person name="Kiel J.A."/>
            <person name="Kim J.M."/>
            <person name="van der Klei I.J."/>
            <person name="Klis F.M."/>
            <person name="Kovalchuk A."/>
            <person name="Krasevec N."/>
            <person name="Kubicek C.P."/>
            <person name="Liu B."/>
            <person name="Maccabe A."/>
            <person name="Meyer V."/>
            <person name="Mirabito P."/>
            <person name="Miskei M."/>
            <person name="Mos M."/>
            <person name="Mullins J."/>
            <person name="Nelson D.R."/>
            <person name="Nielsen J."/>
            <person name="Oakley B.R."/>
            <person name="Osmani S.A."/>
            <person name="Pakula T."/>
            <person name="Paszewski A."/>
            <person name="Paulsen I."/>
            <person name="Pilsyk S."/>
            <person name="Pocsi I."/>
            <person name="Punt P.J."/>
            <person name="Ram A.F."/>
            <person name="Ren Q."/>
            <person name="Robellet X."/>
            <person name="Robson G."/>
            <person name="Seiboth B."/>
            <person name="van Solingen P."/>
            <person name="Specht T."/>
            <person name="Sun J."/>
            <person name="Taheri-Talesh N."/>
            <person name="Takeshita N."/>
            <person name="Ussery D."/>
            <person name="vanKuyk P.A."/>
            <person name="Visser H."/>
            <person name="van de Vondervoort P.J."/>
            <person name="de Vries R.P."/>
            <person name="Walton J."/>
            <person name="Xiang X."/>
            <person name="Xiong Y."/>
            <person name="Zeng A.P."/>
            <person name="Brandt B.W."/>
            <person name="Cornell M.J."/>
            <person name="van den Hondel C.A."/>
            <person name="Visser J."/>
            <person name="Oliver S.G."/>
            <person name="Turner G."/>
        </authorList>
    </citation>
    <scope>GENOME REANNOTATION</scope>
    <source>
        <strain>FGSC A4 / ATCC 38163 / CBS 112.46 / NRRL 194 / M139</strain>
    </source>
</reference>
<protein>
    <recommendedName>
        <fullName>Mitotic-spindle organizing protein 1</fullName>
    </recommendedName>
    <alternativeName>
        <fullName>Mitotic-spindle organizing protein associated with a ring of gamma-tubulin 1</fullName>
    </alternativeName>
</protein>
<keyword id="KW-0963">Cytoplasm</keyword>
<keyword id="KW-0206">Cytoskeleton</keyword>
<keyword id="KW-1185">Reference proteome</keyword>